<proteinExistence type="evidence at protein level"/>
<protein>
    <recommendedName>
        <fullName>Uncharacterized protein ZK1320.3</fullName>
    </recommendedName>
</protein>
<organism>
    <name type="scientific">Caenorhabditis elegans</name>
    <dbReference type="NCBI Taxonomy" id="6239"/>
    <lineage>
        <taxon>Eukaryota</taxon>
        <taxon>Metazoa</taxon>
        <taxon>Ecdysozoa</taxon>
        <taxon>Nematoda</taxon>
        <taxon>Chromadorea</taxon>
        <taxon>Rhabditida</taxon>
        <taxon>Rhabditina</taxon>
        <taxon>Rhabditomorpha</taxon>
        <taxon>Rhabditoidea</taxon>
        <taxon>Rhabditidae</taxon>
        <taxon>Peloderinae</taxon>
        <taxon>Caenorhabditis</taxon>
    </lineage>
</organism>
<evidence type="ECO:0000255" key="1"/>
<evidence type="ECO:0000269" key="2">
    <source>
    </source>
</evidence>
<feature type="signal peptide" evidence="1">
    <location>
        <begin position="1"/>
        <end position="16"/>
    </location>
</feature>
<feature type="chain" id="PRO_0000065573" description="Uncharacterized protein ZK1320.3">
    <location>
        <begin position="17"/>
        <end position="208"/>
    </location>
</feature>
<feature type="glycosylation site" description="N-linked (GlcNAc...) asparagine" evidence="2">
    <location>
        <position position="79"/>
    </location>
</feature>
<keyword id="KW-0325">Glycoprotein</keyword>
<keyword id="KW-1185">Reference proteome</keyword>
<keyword id="KW-0732">Signal</keyword>
<sequence>MKFLLIACLAVPAILAQQTSAPGGNLCTYPPQGDESNQKAVPIQDFRTSGLDFVRPNWCITHCADRKSVKAAVRFQFANQSTAVPTYKVRRTFTRYSGMKVHAELISGNPTKRDDDPFNFCMDDAVSAQIDTIVNTYNDIETMSEALNFYINKPGWAYIIYDMGVPPSIIETDNVKHDMNYCEKSSNKQMPDGTYMTYQVFAGLIKAN</sequence>
<reference key="1">
    <citation type="journal article" date="1998" name="Science">
        <title>Genome sequence of the nematode C. elegans: a platform for investigating biology.</title>
        <authorList>
            <consortium name="The C. elegans sequencing consortium"/>
        </authorList>
    </citation>
    <scope>NUCLEOTIDE SEQUENCE [LARGE SCALE GENOMIC DNA]</scope>
    <source>
        <strain>Bristol N2</strain>
    </source>
</reference>
<reference key="2">
    <citation type="journal article" date="2007" name="Mol. Cell. Proteomics">
        <title>Proteomics reveals N-linked glycoprotein diversity in Caenorhabditis elegans and suggests an atypical translocation mechanism for integral membrane proteins.</title>
        <authorList>
            <person name="Kaji H."/>
            <person name="Kamiie J."/>
            <person name="Kawakami H."/>
            <person name="Kido K."/>
            <person name="Yamauchi Y."/>
            <person name="Shinkawa T."/>
            <person name="Taoka M."/>
            <person name="Takahashi N."/>
            <person name="Isobe T."/>
        </authorList>
    </citation>
    <scope>GLYCOSYLATION [LARGE SCALE ANALYSIS] AT ASN-79</scope>
    <scope>IDENTIFICATION BY MASS SPECTROMETRY</scope>
    <source>
        <strain>Bristol N2</strain>
    </source>
</reference>
<name>YS23_CAEEL</name>
<dbReference type="EMBL" id="Z46934">
    <property type="protein sequence ID" value="CAA87041.1"/>
    <property type="molecule type" value="Genomic_DNA"/>
</dbReference>
<dbReference type="PIR" id="T27749">
    <property type="entry name" value="T27749"/>
</dbReference>
<dbReference type="RefSeq" id="NP_496084.1">
    <property type="nucleotide sequence ID" value="NM_063683.8"/>
</dbReference>
<dbReference type="BioGRID" id="39844">
    <property type="interactions" value="4"/>
</dbReference>
<dbReference type="FunCoup" id="Q09365">
    <property type="interactions" value="1660"/>
</dbReference>
<dbReference type="STRING" id="6239.ZK1320.3.2"/>
<dbReference type="iPTMnet" id="Q09365"/>
<dbReference type="PaxDb" id="6239-ZK1320.3.1"/>
<dbReference type="PeptideAtlas" id="Q09365"/>
<dbReference type="EnsemblMetazoa" id="ZK1320.3.1">
    <property type="protein sequence ID" value="ZK1320.3.1"/>
    <property type="gene ID" value="WBGene00014253"/>
</dbReference>
<dbReference type="GeneID" id="174521"/>
<dbReference type="KEGG" id="cel:CELE_ZK1320.3"/>
<dbReference type="UCSC" id="ZK1320.3.2">
    <property type="organism name" value="c. elegans"/>
</dbReference>
<dbReference type="AGR" id="WB:WBGene00014253"/>
<dbReference type="CTD" id="174521"/>
<dbReference type="WormBase" id="ZK1320.3">
    <property type="protein sequence ID" value="CE01701"/>
    <property type="gene ID" value="WBGene00014253"/>
</dbReference>
<dbReference type="eggNOG" id="ENOG502TH6E">
    <property type="taxonomic scope" value="Eukaryota"/>
</dbReference>
<dbReference type="GeneTree" id="ENSGT00970000196401"/>
<dbReference type="HOGENOM" id="CLU_1321955_0_0_1"/>
<dbReference type="InParanoid" id="Q09365"/>
<dbReference type="OMA" id="GWAYIIY"/>
<dbReference type="OrthoDB" id="5823537at2759"/>
<dbReference type="PRO" id="PR:Q09365"/>
<dbReference type="Proteomes" id="UP000001940">
    <property type="component" value="Chromosome II"/>
</dbReference>
<dbReference type="Bgee" id="WBGene00014253">
    <property type="expression patterns" value="Expressed in larva and 4 other cell types or tissues"/>
</dbReference>
<dbReference type="InterPro" id="IPR035274">
    <property type="entry name" value="DUF5352"/>
</dbReference>
<dbReference type="Pfam" id="PF17303">
    <property type="entry name" value="DUF5352"/>
    <property type="match status" value="1"/>
</dbReference>
<accession>Q09365</accession>
<gene>
    <name type="ORF">ZK1320.3</name>
</gene>